<evidence type="ECO:0000255" key="1">
    <source>
        <dbReference type="HAMAP-Rule" id="MF_00303"/>
    </source>
</evidence>
<feature type="chain" id="PRO_1000022691" description="Trigger factor">
    <location>
        <begin position="1"/>
        <end position="445"/>
    </location>
</feature>
<feature type="domain" description="PPIase FKBP-type" evidence="1">
    <location>
        <begin position="168"/>
        <end position="253"/>
    </location>
</feature>
<sequence length="445" mass="49975">MEVTQTKAEGLSRTFAVKVPVSELQAKLDARIEEIRPQMRLKGFRPGKVPAAHVRKMYGRDLMGEVIDKLVNETNQKALEENSLRPAGTPNVDMQADIEKVVTGKEDLSYQMHVDVMPEFTPVDVSTLTIVRPVAEIADEQIDEALKRIADQNMKYEPRAEGEASQDGDAVIVDFVGKIDGEAFEGGTAEQQSVVLGANRFIPGFEEQLLGVKAGEEKELNVSFPEDYPAANLAGKAAVFETKIHEVRAPQTPEMDDEFAKGLGLESLEQLRGLVKDQLANEHTTASRSKAKRDLLDKLDAAHDFDLPPGMVDQEFEQIWQQLQREMDAGRVSDEEKAKPEETLRDEYRKIAERRVRLGLVLAEVGRIADVRISEAEVNQALIREARQYPGQEREVVQFFQKNPNAMAQLRAPIYEDKVVDHILETAKVEEKTVTREELFAEDEE</sequence>
<gene>
    <name evidence="1" type="primary">tig</name>
    <name type="ordered locus">HNE_2069</name>
</gene>
<keyword id="KW-0131">Cell cycle</keyword>
<keyword id="KW-0132">Cell division</keyword>
<keyword id="KW-0143">Chaperone</keyword>
<keyword id="KW-0963">Cytoplasm</keyword>
<keyword id="KW-0413">Isomerase</keyword>
<keyword id="KW-1185">Reference proteome</keyword>
<keyword id="KW-0697">Rotamase</keyword>
<organism>
    <name type="scientific">Hyphomonas neptunium (strain ATCC 15444)</name>
    <dbReference type="NCBI Taxonomy" id="228405"/>
    <lineage>
        <taxon>Bacteria</taxon>
        <taxon>Pseudomonadati</taxon>
        <taxon>Pseudomonadota</taxon>
        <taxon>Alphaproteobacteria</taxon>
        <taxon>Hyphomonadales</taxon>
        <taxon>Hyphomonadaceae</taxon>
        <taxon>Hyphomonas</taxon>
    </lineage>
</organism>
<dbReference type="EC" id="5.2.1.8" evidence="1"/>
<dbReference type="EMBL" id="CP000158">
    <property type="protein sequence ID" value="ABI75633.1"/>
    <property type="molecule type" value="Genomic_DNA"/>
</dbReference>
<dbReference type="RefSeq" id="WP_011647066.1">
    <property type="nucleotide sequence ID" value="NC_008358.1"/>
</dbReference>
<dbReference type="SMR" id="Q0C0H6"/>
<dbReference type="STRING" id="228405.HNE_2069"/>
<dbReference type="KEGG" id="hne:HNE_2069"/>
<dbReference type="eggNOG" id="COG0544">
    <property type="taxonomic scope" value="Bacteria"/>
</dbReference>
<dbReference type="HOGENOM" id="CLU_033058_2_2_5"/>
<dbReference type="Proteomes" id="UP000001959">
    <property type="component" value="Chromosome"/>
</dbReference>
<dbReference type="GO" id="GO:0005737">
    <property type="term" value="C:cytoplasm"/>
    <property type="evidence" value="ECO:0007669"/>
    <property type="project" value="UniProtKB-SubCell"/>
</dbReference>
<dbReference type="GO" id="GO:0003755">
    <property type="term" value="F:peptidyl-prolyl cis-trans isomerase activity"/>
    <property type="evidence" value="ECO:0007669"/>
    <property type="project" value="UniProtKB-UniRule"/>
</dbReference>
<dbReference type="GO" id="GO:0044183">
    <property type="term" value="F:protein folding chaperone"/>
    <property type="evidence" value="ECO:0007669"/>
    <property type="project" value="TreeGrafter"/>
</dbReference>
<dbReference type="GO" id="GO:0043022">
    <property type="term" value="F:ribosome binding"/>
    <property type="evidence" value="ECO:0007669"/>
    <property type="project" value="TreeGrafter"/>
</dbReference>
<dbReference type="GO" id="GO:0051083">
    <property type="term" value="P:'de novo' cotranslational protein folding"/>
    <property type="evidence" value="ECO:0007669"/>
    <property type="project" value="TreeGrafter"/>
</dbReference>
<dbReference type="GO" id="GO:0051301">
    <property type="term" value="P:cell division"/>
    <property type="evidence" value="ECO:0007669"/>
    <property type="project" value="UniProtKB-KW"/>
</dbReference>
<dbReference type="GO" id="GO:0061077">
    <property type="term" value="P:chaperone-mediated protein folding"/>
    <property type="evidence" value="ECO:0007669"/>
    <property type="project" value="TreeGrafter"/>
</dbReference>
<dbReference type="GO" id="GO:0015031">
    <property type="term" value="P:protein transport"/>
    <property type="evidence" value="ECO:0007669"/>
    <property type="project" value="UniProtKB-UniRule"/>
</dbReference>
<dbReference type="GO" id="GO:0043335">
    <property type="term" value="P:protein unfolding"/>
    <property type="evidence" value="ECO:0007669"/>
    <property type="project" value="TreeGrafter"/>
</dbReference>
<dbReference type="FunFam" id="3.10.50.40:FF:000001">
    <property type="entry name" value="Trigger factor"/>
    <property type="match status" value="1"/>
</dbReference>
<dbReference type="Gene3D" id="3.10.50.40">
    <property type="match status" value="1"/>
</dbReference>
<dbReference type="Gene3D" id="3.30.70.1050">
    <property type="entry name" value="Trigger factor ribosome-binding domain"/>
    <property type="match status" value="1"/>
</dbReference>
<dbReference type="Gene3D" id="1.10.3120.10">
    <property type="entry name" value="Trigger factor, C-terminal domain"/>
    <property type="match status" value="1"/>
</dbReference>
<dbReference type="HAMAP" id="MF_00303">
    <property type="entry name" value="Trigger_factor_Tig"/>
    <property type="match status" value="1"/>
</dbReference>
<dbReference type="InterPro" id="IPR046357">
    <property type="entry name" value="PPIase_dom_sf"/>
</dbReference>
<dbReference type="InterPro" id="IPR001179">
    <property type="entry name" value="PPIase_FKBP_dom"/>
</dbReference>
<dbReference type="InterPro" id="IPR005215">
    <property type="entry name" value="Trig_fac"/>
</dbReference>
<dbReference type="InterPro" id="IPR008880">
    <property type="entry name" value="Trigger_fac_C"/>
</dbReference>
<dbReference type="InterPro" id="IPR037041">
    <property type="entry name" value="Trigger_fac_C_sf"/>
</dbReference>
<dbReference type="InterPro" id="IPR008881">
    <property type="entry name" value="Trigger_fac_ribosome-bd_bac"/>
</dbReference>
<dbReference type="InterPro" id="IPR036611">
    <property type="entry name" value="Trigger_fac_ribosome-bd_sf"/>
</dbReference>
<dbReference type="InterPro" id="IPR027304">
    <property type="entry name" value="Trigger_fact/SurA_dom_sf"/>
</dbReference>
<dbReference type="NCBIfam" id="TIGR00115">
    <property type="entry name" value="tig"/>
    <property type="match status" value="1"/>
</dbReference>
<dbReference type="PANTHER" id="PTHR30560">
    <property type="entry name" value="TRIGGER FACTOR CHAPERONE AND PEPTIDYL-PROLYL CIS/TRANS ISOMERASE"/>
    <property type="match status" value="1"/>
</dbReference>
<dbReference type="PANTHER" id="PTHR30560:SF3">
    <property type="entry name" value="TRIGGER FACTOR-LIKE PROTEIN TIG, CHLOROPLASTIC"/>
    <property type="match status" value="1"/>
</dbReference>
<dbReference type="Pfam" id="PF00254">
    <property type="entry name" value="FKBP_C"/>
    <property type="match status" value="1"/>
</dbReference>
<dbReference type="Pfam" id="PF05698">
    <property type="entry name" value="Trigger_C"/>
    <property type="match status" value="1"/>
</dbReference>
<dbReference type="Pfam" id="PF05697">
    <property type="entry name" value="Trigger_N"/>
    <property type="match status" value="1"/>
</dbReference>
<dbReference type="PIRSF" id="PIRSF003095">
    <property type="entry name" value="Trigger_factor"/>
    <property type="match status" value="1"/>
</dbReference>
<dbReference type="SUPFAM" id="SSF54534">
    <property type="entry name" value="FKBP-like"/>
    <property type="match status" value="1"/>
</dbReference>
<dbReference type="SUPFAM" id="SSF109998">
    <property type="entry name" value="Triger factor/SurA peptide-binding domain-like"/>
    <property type="match status" value="1"/>
</dbReference>
<dbReference type="SUPFAM" id="SSF102735">
    <property type="entry name" value="Trigger factor ribosome-binding domain"/>
    <property type="match status" value="1"/>
</dbReference>
<dbReference type="PROSITE" id="PS50059">
    <property type="entry name" value="FKBP_PPIASE"/>
    <property type="match status" value="1"/>
</dbReference>
<accession>Q0C0H6</accession>
<protein>
    <recommendedName>
        <fullName evidence="1">Trigger factor</fullName>
        <shortName evidence="1">TF</shortName>
        <ecNumber evidence="1">5.2.1.8</ecNumber>
    </recommendedName>
    <alternativeName>
        <fullName evidence="1">PPIase</fullName>
    </alternativeName>
</protein>
<reference key="1">
    <citation type="journal article" date="2006" name="J. Bacteriol.">
        <title>Comparative genomic evidence for a close relationship between the dimorphic prosthecate bacteria Hyphomonas neptunium and Caulobacter crescentus.</title>
        <authorList>
            <person name="Badger J.H."/>
            <person name="Hoover T.R."/>
            <person name="Brun Y.V."/>
            <person name="Weiner R.M."/>
            <person name="Laub M.T."/>
            <person name="Alexandre G."/>
            <person name="Mrazek J."/>
            <person name="Ren Q."/>
            <person name="Paulsen I.T."/>
            <person name="Nelson K.E."/>
            <person name="Khouri H.M."/>
            <person name="Radune D."/>
            <person name="Sosa J."/>
            <person name="Dodson R.J."/>
            <person name="Sullivan S.A."/>
            <person name="Rosovitz M.J."/>
            <person name="Madupu R."/>
            <person name="Brinkac L.M."/>
            <person name="Durkin A.S."/>
            <person name="Daugherty S.C."/>
            <person name="Kothari S.P."/>
            <person name="Giglio M.G."/>
            <person name="Zhou L."/>
            <person name="Haft D.H."/>
            <person name="Selengut J.D."/>
            <person name="Davidsen T.M."/>
            <person name="Yang Q."/>
            <person name="Zafar N."/>
            <person name="Ward N.L."/>
        </authorList>
    </citation>
    <scope>NUCLEOTIDE SEQUENCE [LARGE SCALE GENOMIC DNA]</scope>
    <source>
        <strain>ATCC 15444</strain>
    </source>
</reference>
<comment type="function">
    <text evidence="1">Involved in protein export. Acts as a chaperone by maintaining the newly synthesized protein in an open conformation. Functions as a peptidyl-prolyl cis-trans isomerase.</text>
</comment>
<comment type="catalytic activity">
    <reaction evidence="1">
        <text>[protein]-peptidylproline (omega=180) = [protein]-peptidylproline (omega=0)</text>
        <dbReference type="Rhea" id="RHEA:16237"/>
        <dbReference type="Rhea" id="RHEA-COMP:10747"/>
        <dbReference type="Rhea" id="RHEA-COMP:10748"/>
        <dbReference type="ChEBI" id="CHEBI:83833"/>
        <dbReference type="ChEBI" id="CHEBI:83834"/>
        <dbReference type="EC" id="5.2.1.8"/>
    </reaction>
</comment>
<comment type="subcellular location">
    <subcellularLocation>
        <location>Cytoplasm</location>
    </subcellularLocation>
    <text evidence="1">About half TF is bound to the ribosome near the polypeptide exit tunnel while the other half is free in the cytoplasm.</text>
</comment>
<comment type="domain">
    <text evidence="1">Consists of 3 domains; the N-terminus binds the ribosome, the middle domain has PPIase activity, while the C-terminus has intrinsic chaperone activity on its own.</text>
</comment>
<comment type="similarity">
    <text evidence="1">Belongs to the FKBP-type PPIase family. Tig subfamily.</text>
</comment>
<proteinExistence type="inferred from homology"/>
<name>TIG_HYPNA</name>